<sequence length="283" mass="30644">MTAPRLTLPSPAKLNLMLHILGRREDGYHELQTLFQFLDYGDEITFAVRDDGVIRLHTEFDGVPHDSNLIVRAAKKLQEQSACSLGIDIWIDKILPMGGGIGGGSSNAATTLLGLNHLWRLGWDEDRLAALGLTLGADVPVFVRGHAAFAEGVGEKLTPVEPAEPWYVVLVPQVSVSTAEIFSDPLLTRNTPPIKVRPVPEGNSRNDCLPVVSRRYPEVRNALNLLGNFTEAKLTGTGSCVFGGFPSKAEADKVSALLTETLTGFVAKGSNVSMLHRKLQSLL</sequence>
<accession>Q3K6W5</accession>
<evidence type="ECO:0000255" key="1">
    <source>
        <dbReference type="HAMAP-Rule" id="MF_00061"/>
    </source>
</evidence>
<dbReference type="EC" id="2.7.1.148" evidence="1"/>
<dbReference type="EMBL" id="CP000094">
    <property type="protein sequence ID" value="ABA76489.1"/>
    <property type="molecule type" value="Genomic_DNA"/>
</dbReference>
<dbReference type="RefSeq" id="WP_011335925.1">
    <property type="nucleotide sequence ID" value="NC_007492.2"/>
</dbReference>
<dbReference type="SMR" id="Q3K6W5"/>
<dbReference type="KEGG" id="pfo:Pfl01_4752"/>
<dbReference type="eggNOG" id="COG1947">
    <property type="taxonomic scope" value="Bacteria"/>
</dbReference>
<dbReference type="HOGENOM" id="CLU_053057_3_0_6"/>
<dbReference type="UniPathway" id="UPA00056">
    <property type="reaction ID" value="UER00094"/>
</dbReference>
<dbReference type="Proteomes" id="UP000002704">
    <property type="component" value="Chromosome"/>
</dbReference>
<dbReference type="GO" id="GO:0050515">
    <property type="term" value="F:4-(cytidine 5'-diphospho)-2-C-methyl-D-erythritol kinase activity"/>
    <property type="evidence" value="ECO:0007669"/>
    <property type="project" value="UniProtKB-UniRule"/>
</dbReference>
<dbReference type="GO" id="GO:0005524">
    <property type="term" value="F:ATP binding"/>
    <property type="evidence" value="ECO:0007669"/>
    <property type="project" value="UniProtKB-UniRule"/>
</dbReference>
<dbReference type="GO" id="GO:0019288">
    <property type="term" value="P:isopentenyl diphosphate biosynthetic process, methylerythritol 4-phosphate pathway"/>
    <property type="evidence" value="ECO:0007669"/>
    <property type="project" value="UniProtKB-UniRule"/>
</dbReference>
<dbReference type="GO" id="GO:0016114">
    <property type="term" value="P:terpenoid biosynthetic process"/>
    <property type="evidence" value="ECO:0007669"/>
    <property type="project" value="InterPro"/>
</dbReference>
<dbReference type="FunFam" id="3.30.230.10:FF:000022">
    <property type="entry name" value="4-diphosphocytidyl-2-C-methyl-D-erythritol kinase"/>
    <property type="match status" value="1"/>
</dbReference>
<dbReference type="Gene3D" id="3.30.230.10">
    <property type="match status" value="1"/>
</dbReference>
<dbReference type="Gene3D" id="3.30.70.890">
    <property type="entry name" value="GHMP kinase, C-terminal domain"/>
    <property type="match status" value="1"/>
</dbReference>
<dbReference type="HAMAP" id="MF_00061">
    <property type="entry name" value="IspE"/>
    <property type="match status" value="1"/>
</dbReference>
<dbReference type="InterPro" id="IPR013750">
    <property type="entry name" value="GHMP_kinase_C_dom"/>
</dbReference>
<dbReference type="InterPro" id="IPR036554">
    <property type="entry name" value="GHMP_kinase_C_sf"/>
</dbReference>
<dbReference type="InterPro" id="IPR006204">
    <property type="entry name" value="GHMP_kinase_N_dom"/>
</dbReference>
<dbReference type="InterPro" id="IPR004424">
    <property type="entry name" value="IspE"/>
</dbReference>
<dbReference type="InterPro" id="IPR020568">
    <property type="entry name" value="Ribosomal_Su5_D2-typ_SF"/>
</dbReference>
<dbReference type="InterPro" id="IPR014721">
    <property type="entry name" value="Ribsml_uS5_D2-typ_fold_subgr"/>
</dbReference>
<dbReference type="NCBIfam" id="TIGR00154">
    <property type="entry name" value="ispE"/>
    <property type="match status" value="1"/>
</dbReference>
<dbReference type="PANTHER" id="PTHR43527">
    <property type="entry name" value="4-DIPHOSPHOCYTIDYL-2-C-METHYL-D-ERYTHRITOL KINASE, CHLOROPLASTIC"/>
    <property type="match status" value="1"/>
</dbReference>
<dbReference type="PANTHER" id="PTHR43527:SF2">
    <property type="entry name" value="4-DIPHOSPHOCYTIDYL-2-C-METHYL-D-ERYTHRITOL KINASE, CHLOROPLASTIC"/>
    <property type="match status" value="1"/>
</dbReference>
<dbReference type="Pfam" id="PF08544">
    <property type="entry name" value="GHMP_kinases_C"/>
    <property type="match status" value="1"/>
</dbReference>
<dbReference type="Pfam" id="PF00288">
    <property type="entry name" value="GHMP_kinases_N"/>
    <property type="match status" value="1"/>
</dbReference>
<dbReference type="PIRSF" id="PIRSF010376">
    <property type="entry name" value="IspE"/>
    <property type="match status" value="1"/>
</dbReference>
<dbReference type="SUPFAM" id="SSF55060">
    <property type="entry name" value="GHMP Kinase, C-terminal domain"/>
    <property type="match status" value="1"/>
</dbReference>
<dbReference type="SUPFAM" id="SSF54211">
    <property type="entry name" value="Ribosomal protein S5 domain 2-like"/>
    <property type="match status" value="1"/>
</dbReference>
<feature type="chain" id="PRO_0000235119" description="4-diphosphocytidyl-2-C-methyl-D-erythritol kinase">
    <location>
        <begin position="1"/>
        <end position="283"/>
    </location>
</feature>
<feature type="active site" evidence="1">
    <location>
        <position position="13"/>
    </location>
</feature>
<feature type="active site" evidence="1">
    <location>
        <position position="138"/>
    </location>
</feature>
<feature type="binding site" evidence="1">
    <location>
        <begin position="96"/>
        <end position="106"/>
    </location>
    <ligand>
        <name>ATP</name>
        <dbReference type="ChEBI" id="CHEBI:30616"/>
    </ligand>
</feature>
<proteinExistence type="inferred from homology"/>
<name>ISPE_PSEPF</name>
<gene>
    <name evidence="1" type="primary">ispE</name>
    <name type="ordered locus">Pfl01_4752</name>
</gene>
<reference key="1">
    <citation type="journal article" date="2009" name="Genome Biol.">
        <title>Genomic and genetic analyses of diversity and plant interactions of Pseudomonas fluorescens.</title>
        <authorList>
            <person name="Silby M.W."/>
            <person name="Cerdeno-Tarraga A.M."/>
            <person name="Vernikos G.S."/>
            <person name="Giddens S.R."/>
            <person name="Jackson R.W."/>
            <person name="Preston G.M."/>
            <person name="Zhang X.-X."/>
            <person name="Moon C.D."/>
            <person name="Gehrig S.M."/>
            <person name="Godfrey S.A.C."/>
            <person name="Knight C.G."/>
            <person name="Malone J.G."/>
            <person name="Robinson Z."/>
            <person name="Spiers A.J."/>
            <person name="Harris S."/>
            <person name="Challis G.L."/>
            <person name="Yaxley A.M."/>
            <person name="Harris D."/>
            <person name="Seeger K."/>
            <person name="Murphy L."/>
            <person name="Rutter S."/>
            <person name="Squares R."/>
            <person name="Quail M.A."/>
            <person name="Saunders E."/>
            <person name="Mavromatis K."/>
            <person name="Brettin T.S."/>
            <person name="Bentley S.D."/>
            <person name="Hothersall J."/>
            <person name="Stephens E."/>
            <person name="Thomas C.M."/>
            <person name="Parkhill J."/>
            <person name="Levy S.B."/>
            <person name="Rainey P.B."/>
            <person name="Thomson N.R."/>
        </authorList>
    </citation>
    <scope>NUCLEOTIDE SEQUENCE [LARGE SCALE GENOMIC DNA]</scope>
    <source>
        <strain>Pf0-1</strain>
    </source>
</reference>
<protein>
    <recommendedName>
        <fullName evidence="1">4-diphosphocytidyl-2-C-methyl-D-erythritol kinase</fullName>
        <shortName evidence="1">CMK</shortName>
        <ecNumber evidence="1">2.7.1.148</ecNumber>
    </recommendedName>
    <alternativeName>
        <fullName evidence="1">4-(cytidine-5'-diphospho)-2-C-methyl-D-erythritol kinase</fullName>
    </alternativeName>
</protein>
<comment type="function">
    <text evidence="1">Catalyzes the phosphorylation of the position 2 hydroxy group of 4-diphosphocytidyl-2C-methyl-D-erythritol.</text>
</comment>
<comment type="catalytic activity">
    <reaction evidence="1">
        <text>4-CDP-2-C-methyl-D-erythritol + ATP = 4-CDP-2-C-methyl-D-erythritol 2-phosphate + ADP + H(+)</text>
        <dbReference type="Rhea" id="RHEA:18437"/>
        <dbReference type="ChEBI" id="CHEBI:15378"/>
        <dbReference type="ChEBI" id="CHEBI:30616"/>
        <dbReference type="ChEBI" id="CHEBI:57823"/>
        <dbReference type="ChEBI" id="CHEBI:57919"/>
        <dbReference type="ChEBI" id="CHEBI:456216"/>
        <dbReference type="EC" id="2.7.1.148"/>
    </reaction>
</comment>
<comment type="pathway">
    <text evidence="1">Isoprenoid biosynthesis; isopentenyl diphosphate biosynthesis via DXP pathway; isopentenyl diphosphate from 1-deoxy-D-xylulose 5-phosphate: step 3/6.</text>
</comment>
<comment type="similarity">
    <text evidence="1">Belongs to the GHMP kinase family. IspE subfamily.</text>
</comment>
<organism>
    <name type="scientific">Pseudomonas fluorescens (strain Pf0-1)</name>
    <dbReference type="NCBI Taxonomy" id="205922"/>
    <lineage>
        <taxon>Bacteria</taxon>
        <taxon>Pseudomonadati</taxon>
        <taxon>Pseudomonadota</taxon>
        <taxon>Gammaproteobacteria</taxon>
        <taxon>Pseudomonadales</taxon>
        <taxon>Pseudomonadaceae</taxon>
        <taxon>Pseudomonas</taxon>
    </lineage>
</organism>
<keyword id="KW-0067">ATP-binding</keyword>
<keyword id="KW-0414">Isoprene biosynthesis</keyword>
<keyword id="KW-0418">Kinase</keyword>
<keyword id="KW-0547">Nucleotide-binding</keyword>
<keyword id="KW-0808">Transferase</keyword>